<accession>Q2YYM7</accession>
<comment type="function">
    <text evidence="1">Formation of pseudouridine at positions 38, 39 and 40 in the anticodon stem and loop of transfer RNAs.</text>
</comment>
<comment type="catalytic activity">
    <reaction evidence="1">
        <text>uridine(38/39/40) in tRNA = pseudouridine(38/39/40) in tRNA</text>
        <dbReference type="Rhea" id="RHEA:22376"/>
        <dbReference type="Rhea" id="RHEA-COMP:10085"/>
        <dbReference type="Rhea" id="RHEA-COMP:10087"/>
        <dbReference type="ChEBI" id="CHEBI:65314"/>
        <dbReference type="ChEBI" id="CHEBI:65315"/>
        <dbReference type="EC" id="5.4.99.12"/>
    </reaction>
</comment>
<comment type="subunit">
    <text evidence="1">Homodimer.</text>
</comment>
<comment type="similarity">
    <text evidence="1">Belongs to the tRNA pseudouridine synthase TruA family.</text>
</comment>
<gene>
    <name evidence="1" type="primary">truA</name>
    <name type="ordered locus">SAB2092c</name>
</gene>
<keyword id="KW-0413">Isomerase</keyword>
<keyword id="KW-0819">tRNA processing</keyword>
<sequence length="267" mass="31387">MRILVEIAYQGNNFLGFQIQQNGRTVQQQFEKLLQRMHKRHVRIHPSSRTDRGVHAIQQYFHFDTELNIPMSQWQYAMNRTLPVDIYVNNVVTVDDDFHCRYDCVGKRYRYKVYQAQHRDPFQRGLKTFIPEPLDLDKMNRAAQQFIGTHDFTGFCSQKTEVESKVRTLYQSEIVKTDDGFDYIVTGSGFLYNMVRVLVAFLIEVGKGRHEVSDVPKLLESKNRKNVPFTAPAEGLYLEKIYLDENELLKDFGNDIKIHRKKSLQND</sequence>
<protein>
    <recommendedName>
        <fullName evidence="1">tRNA pseudouridine synthase A</fullName>
        <ecNumber evidence="1">5.4.99.12</ecNumber>
    </recommendedName>
    <alternativeName>
        <fullName evidence="1">tRNA pseudouridine(38-40) synthase</fullName>
    </alternativeName>
    <alternativeName>
        <fullName evidence="1">tRNA pseudouridylate synthase I</fullName>
    </alternativeName>
    <alternativeName>
        <fullName evidence="1">tRNA-uridine isomerase I</fullName>
    </alternativeName>
</protein>
<reference key="1">
    <citation type="journal article" date="2007" name="PLoS ONE">
        <title>Molecular correlates of host specialization in Staphylococcus aureus.</title>
        <authorList>
            <person name="Herron-Olson L."/>
            <person name="Fitzgerald J.R."/>
            <person name="Musser J.M."/>
            <person name="Kapur V."/>
        </authorList>
    </citation>
    <scope>NUCLEOTIDE SEQUENCE [LARGE SCALE GENOMIC DNA]</scope>
    <source>
        <strain>bovine RF122 / ET3-1</strain>
    </source>
</reference>
<evidence type="ECO:0000255" key="1">
    <source>
        <dbReference type="HAMAP-Rule" id="MF_00171"/>
    </source>
</evidence>
<organism>
    <name type="scientific">Staphylococcus aureus (strain bovine RF122 / ET3-1)</name>
    <dbReference type="NCBI Taxonomy" id="273036"/>
    <lineage>
        <taxon>Bacteria</taxon>
        <taxon>Bacillati</taxon>
        <taxon>Bacillota</taxon>
        <taxon>Bacilli</taxon>
        <taxon>Bacillales</taxon>
        <taxon>Staphylococcaceae</taxon>
        <taxon>Staphylococcus</taxon>
    </lineage>
</organism>
<dbReference type="EC" id="5.4.99.12" evidence="1"/>
<dbReference type="EMBL" id="AJ938182">
    <property type="protein sequence ID" value="CAI81781.1"/>
    <property type="molecule type" value="Genomic_DNA"/>
</dbReference>
<dbReference type="RefSeq" id="WP_001221862.1">
    <property type="nucleotide sequence ID" value="NC_007622.1"/>
</dbReference>
<dbReference type="SMR" id="Q2YYM7"/>
<dbReference type="KEGG" id="sab:SAB2092c"/>
<dbReference type="HOGENOM" id="CLU_014673_0_1_9"/>
<dbReference type="GO" id="GO:0003723">
    <property type="term" value="F:RNA binding"/>
    <property type="evidence" value="ECO:0007669"/>
    <property type="project" value="InterPro"/>
</dbReference>
<dbReference type="GO" id="GO:0160147">
    <property type="term" value="F:tRNA pseudouridine(38-40) synthase activity"/>
    <property type="evidence" value="ECO:0007669"/>
    <property type="project" value="UniProtKB-EC"/>
</dbReference>
<dbReference type="GO" id="GO:0031119">
    <property type="term" value="P:tRNA pseudouridine synthesis"/>
    <property type="evidence" value="ECO:0007669"/>
    <property type="project" value="UniProtKB-UniRule"/>
</dbReference>
<dbReference type="CDD" id="cd02570">
    <property type="entry name" value="PseudoU_synth_EcTruA"/>
    <property type="match status" value="1"/>
</dbReference>
<dbReference type="FunFam" id="3.30.70.580:FF:000001">
    <property type="entry name" value="tRNA pseudouridine synthase A"/>
    <property type="match status" value="1"/>
</dbReference>
<dbReference type="FunFam" id="3.30.70.660:FF:000004">
    <property type="entry name" value="tRNA pseudouridine synthase A"/>
    <property type="match status" value="1"/>
</dbReference>
<dbReference type="Gene3D" id="3.30.70.660">
    <property type="entry name" value="Pseudouridine synthase I, catalytic domain, C-terminal subdomain"/>
    <property type="match status" value="1"/>
</dbReference>
<dbReference type="Gene3D" id="3.30.70.580">
    <property type="entry name" value="Pseudouridine synthase I, catalytic domain, N-terminal subdomain"/>
    <property type="match status" value="1"/>
</dbReference>
<dbReference type="HAMAP" id="MF_00171">
    <property type="entry name" value="TruA"/>
    <property type="match status" value="1"/>
</dbReference>
<dbReference type="InterPro" id="IPR020103">
    <property type="entry name" value="PsdUridine_synth_cat_dom_sf"/>
</dbReference>
<dbReference type="InterPro" id="IPR001406">
    <property type="entry name" value="PsdUridine_synth_TruA"/>
</dbReference>
<dbReference type="InterPro" id="IPR020097">
    <property type="entry name" value="PsdUridine_synth_TruA_a/b_dom"/>
</dbReference>
<dbReference type="InterPro" id="IPR020095">
    <property type="entry name" value="PsdUridine_synth_TruA_C"/>
</dbReference>
<dbReference type="InterPro" id="IPR020094">
    <property type="entry name" value="TruA/RsuA/RluB/E/F_N"/>
</dbReference>
<dbReference type="NCBIfam" id="TIGR00071">
    <property type="entry name" value="hisT_truA"/>
    <property type="match status" value="1"/>
</dbReference>
<dbReference type="PANTHER" id="PTHR11142">
    <property type="entry name" value="PSEUDOURIDYLATE SYNTHASE"/>
    <property type="match status" value="1"/>
</dbReference>
<dbReference type="PANTHER" id="PTHR11142:SF0">
    <property type="entry name" value="TRNA PSEUDOURIDINE SYNTHASE-LIKE 1"/>
    <property type="match status" value="1"/>
</dbReference>
<dbReference type="Pfam" id="PF01416">
    <property type="entry name" value="PseudoU_synth_1"/>
    <property type="match status" value="2"/>
</dbReference>
<dbReference type="PIRSF" id="PIRSF001430">
    <property type="entry name" value="tRNA_psdUrid_synth"/>
    <property type="match status" value="1"/>
</dbReference>
<dbReference type="SUPFAM" id="SSF55120">
    <property type="entry name" value="Pseudouridine synthase"/>
    <property type="match status" value="1"/>
</dbReference>
<proteinExistence type="inferred from homology"/>
<feature type="chain" id="PRO_1000017187" description="tRNA pseudouridine synthase A">
    <location>
        <begin position="1"/>
        <end position="267"/>
    </location>
</feature>
<feature type="active site" description="Nucleophile" evidence="1">
    <location>
        <position position="51"/>
    </location>
</feature>
<feature type="binding site" evidence="1">
    <location>
        <position position="109"/>
    </location>
    <ligand>
        <name>substrate</name>
    </ligand>
</feature>
<name>TRUA_STAAB</name>